<name>RL4_HELPJ</name>
<comment type="function">
    <text evidence="1">One of the primary rRNA binding proteins, this protein initially binds near the 5'-end of the 23S rRNA. It is important during the early stages of 50S assembly. It makes multiple contacts with different domains of the 23S rRNA in the assembled 50S subunit and ribosome.</text>
</comment>
<comment type="function">
    <text evidence="1">Forms part of the polypeptide exit tunnel.</text>
</comment>
<comment type="subunit">
    <text evidence="1">Part of the 50S ribosomal subunit.</text>
</comment>
<comment type="similarity">
    <text evidence="1">Belongs to the universal ribosomal protein uL4 family.</text>
</comment>
<feature type="chain" id="PRO_0000129226" description="Large ribosomal subunit protein uL4">
    <location>
        <begin position="1"/>
        <end position="215"/>
    </location>
</feature>
<feature type="region of interest" description="Disordered" evidence="2">
    <location>
        <begin position="46"/>
        <end position="72"/>
    </location>
</feature>
<feature type="compositionally biased region" description="Gly residues" evidence="2">
    <location>
        <begin position="56"/>
        <end position="71"/>
    </location>
</feature>
<accession>Q9ZJR5</accession>
<gene>
    <name evidence="1" type="primary">rplD</name>
    <name type="ordered locus">jhp_1238</name>
</gene>
<organism>
    <name type="scientific">Helicobacter pylori (strain J99 / ATCC 700824)</name>
    <name type="common">Campylobacter pylori J99</name>
    <dbReference type="NCBI Taxonomy" id="85963"/>
    <lineage>
        <taxon>Bacteria</taxon>
        <taxon>Pseudomonadati</taxon>
        <taxon>Campylobacterota</taxon>
        <taxon>Epsilonproteobacteria</taxon>
        <taxon>Campylobacterales</taxon>
        <taxon>Helicobacteraceae</taxon>
        <taxon>Helicobacter</taxon>
    </lineage>
</organism>
<protein>
    <recommendedName>
        <fullName evidence="1">Large ribosomal subunit protein uL4</fullName>
    </recommendedName>
    <alternativeName>
        <fullName evidence="3">50S ribosomal protein L4</fullName>
    </alternativeName>
</protein>
<proteinExistence type="inferred from homology"/>
<keyword id="KW-0687">Ribonucleoprotein</keyword>
<keyword id="KW-0689">Ribosomal protein</keyword>
<keyword id="KW-0694">RNA-binding</keyword>
<keyword id="KW-0699">rRNA-binding</keyword>
<evidence type="ECO:0000255" key="1">
    <source>
        <dbReference type="HAMAP-Rule" id="MF_01328"/>
    </source>
</evidence>
<evidence type="ECO:0000256" key="2">
    <source>
        <dbReference type="SAM" id="MobiDB-lite"/>
    </source>
</evidence>
<evidence type="ECO:0000305" key="3"/>
<sequence length="215" mass="23989">MSKAIVLDSHLKEKGSVELPKRYEGINSHNLYLYVKHYLSSARANTAKSKNRAEVSGGGRKPWAQKGGGRARAGSITSPVFVGGGVSHGATNKRNYNLKINKKQKRLALEYALEEKAQANKLFVVEKIAIKGVVEDNKRKHLTKEANQMFQALEQRDTLFVCLNMDEYTELAFSNLKKCLVIDVSELNAYLLAAFSSVVMEEAAFQHVVQDKTEE</sequence>
<reference key="1">
    <citation type="journal article" date="1999" name="Nature">
        <title>Genomic sequence comparison of two unrelated isolates of the human gastric pathogen Helicobacter pylori.</title>
        <authorList>
            <person name="Alm R.A."/>
            <person name="Ling L.-S.L."/>
            <person name="Moir D.T."/>
            <person name="King B.L."/>
            <person name="Brown E.D."/>
            <person name="Doig P.C."/>
            <person name="Smith D.R."/>
            <person name="Noonan B."/>
            <person name="Guild B.C."/>
            <person name="deJonge B.L."/>
            <person name="Carmel G."/>
            <person name="Tummino P.J."/>
            <person name="Caruso A."/>
            <person name="Uria-Nickelsen M."/>
            <person name="Mills D.M."/>
            <person name="Ives C."/>
            <person name="Gibson R."/>
            <person name="Merberg D."/>
            <person name="Mills S.D."/>
            <person name="Jiang Q."/>
            <person name="Taylor D.E."/>
            <person name="Vovis G.F."/>
            <person name="Trust T.J."/>
        </authorList>
    </citation>
    <scope>NUCLEOTIDE SEQUENCE [LARGE SCALE GENOMIC DNA]</scope>
    <source>
        <strain>J99 / ATCC 700824</strain>
    </source>
</reference>
<dbReference type="EMBL" id="AE001439">
    <property type="protein sequence ID" value="AAD06789.1"/>
    <property type="molecule type" value="Genomic_DNA"/>
</dbReference>
<dbReference type="PIR" id="F71835">
    <property type="entry name" value="F71835"/>
</dbReference>
<dbReference type="RefSeq" id="WP_000030136.1">
    <property type="nucleotide sequence ID" value="NC_000921.1"/>
</dbReference>
<dbReference type="SMR" id="Q9ZJR5"/>
<dbReference type="KEGG" id="hpj:jhp_1238"/>
<dbReference type="PATRIC" id="fig|85963.30.peg.1333"/>
<dbReference type="eggNOG" id="COG0088">
    <property type="taxonomic scope" value="Bacteria"/>
</dbReference>
<dbReference type="Proteomes" id="UP000000804">
    <property type="component" value="Chromosome"/>
</dbReference>
<dbReference type="GO" id="GO:1990904">
    <property type="term" value="C:ribonucleoprotein complex"/>
    <property type="evidence" value="ECO:0007669"/>
    <property type="project" value="UniProtKB-KW"/>
</dbReference>
<dbReference type="GO" id="GO:0005840">
    <property type="term" value="C:ribosome"/>
    <property type="evidence" value="ECO:0007669"/>
    <property type="project" value="UniProtKB-KW"/>
</dbReference>
<dbReference type="GO" id="GO:0019843">
    <property type="term" value="F:rRNA binding"/>
    <property type="evidence" value="ECO:0007669"/>
    <property type="project" value="UniProtKB-UniRule"/>
</dbReference>
<dbReference type="GO" id="GO:0003735">
    <property type="term" value="F:structural constituent of ribosome"/>
    <property type="evidence" value="ECO:0007669"/>
    <property type="project" value="InterPro"/>
</dbReference>
<dbReference type="GO" id="GO:0006412">
    <property type="term" value="P:translation"/>
    <property type="evidence" value="ECO:0007669"/>
    <property type="project" value="UniProtKB-UniRule"/>
</dbReference>
<dbReference type="FunFam" id="3.40.1370.10:FF:000008">
    <property type="entry name" value="50S ribosomal protein L4"/>
    <property type="match status" value="1"/>
</dbReference>
<dbReference type="Gene3D" id="3.40.1370.10">
    <property type="match status" value="1"/>
</dbReference>
<dbReference type="HAMAP" id="MF_01328_B">
    <property type="entry name" value="Ribosomal_uL4_B"/>
    <property type="match status" value="1"/>
</dbReference>
<dbReference type="InterPro" id="IPR002136">
    <property type="entry name" value="Ribosomal_uL4"/>
</dbReference>
<dbReference type="InterPro" id="IPR013005">
    <property type="entry name" value="Ribosomal_uL4-like"/>
</dbReference>
<dbReference type="InterPro" id="IPR023574">
    <property type="entry name" value="Ribosomal_uL4_dom_sf"/>
</dbReference>
<dbReference type="NCBIfam" id="TIGR03953">
    <property type="entry name" value="rplD_bact"/>
    <property type="match status" value="1"/>
</dbReference>
<dbReference type="PANTHER" id="PTHR10746">
    <property type="entry name" value="50S RIBOSOMAL PROTEIN L4"/>
    <property type="match status" value="1"/>
</dbReference>
<dbReference type="PANTHER" id="PTHR10746:SF6">
    <property type="entry name" value="LARGE RIBOSOMAL SUBUNIT PROTEIN UL4M"/>
    <property type="match status" value="1"/>
</dbReference>
<dbReference type="Pfam" id="PF00573">
    <property type="entry name" value="Ribosomal_L4"/>
    <property type="match status" value="1"/>
</dbReference>
<dbReference type="SUPFAM" id="SSF52166">
    <property type="entry name" value="Ribosomal protein L4"/>
    <property type="match status" value="1"/>
</dbReference>